<sequence length="74" mass="8611">MKNSINIQDQFLNQLRKDGTQVTVFLLNGYQLKGYIKGFDNFTVLLEVQGKQQLIYKHAISTFAPEKNVRFETE</sequence>
<keyword id="KW-0694">RNA-binding</keyword>
<keyword id="KW-0346">Stress response</keyword>
<feature type="chain" id="PRO_1000206101" description="RNA-binding protein Hfq">
    <location>
        <begin position="1"/>
        <end position="74"/>
    </location>
</feature>
<feature type="domain" description="Sm" evidence="2">
    <location>
        <begin position="9"/>
        <end position="69"/>
    </location>
</feature>
<comment type="function">
    <text evidence="1">RNA chaperone that binds small regulatory RNA (sRNAs) and mRNAs to facilitate mRNA translational regulation in response to envelope stress, environmental stress and changes in metabolite concentrations. Also binds with high specificity to tRNAs.</text>
</comment>
<comment type="subunit">
    <text evidence="1">Homohexamer.</text>
</comment>
<comment type="similarity">
    <text evidence="1">Belongs to the Hfq family.</text>
</comment>
<accession>C5D9J0</accession>
<organism>
    <name type="scientific">Geobacillus sp. (strain WCH70)</name>
    <dbReference type="NCBI Taxonomy" id="471223"/>
    <lineage>
        <taxon>Bacteria</taxon>
        <taxon>Bacillati</taxon>
        <taxon>Bacillota</taxon>
        <taxon>Bacilli</taxon>
        <taxon>Bacillales</taxon>
        <taxon>Anoxybacillaceae</taxon>
        <taxon>Geobacillus</taxon>
    </lineage>
</organism>
<protein>
    <recommendedName>
        <fullName evidence="1">RNA-binding protein Hfq</fullName>
    </recommendedName>
</protein>
<evidence type="ECO:0000255" key="1">
    <source>
        <dbReference type="HAMAP-Rule" id="MF_00436"/>
    </source>
</evidence>
<evidence type="ECO:0000255" key="2">
    <source>
        <dbReference type="PROSITE-ProRule" id="PRU01346"/>
    </source>
</evidence>
<proteinExistence type="inferred from homology"/>
<reference key="1">
    <citation type="submission" date="2009-06" db="EMBL/GenBank/DDBJ databases">
        <title>Complete sequence of chromosome of Geopacillus sp. WCH70.</title>
        <authorList>
            <consortium name="US DOE Joint Genome Institute"/>
            <person name="Lucas S."/>
            <person name="Copeland A."/>
            <person name="Lapidus A."/>
            <person name="Glavina del Rio T."/>
            <person name="Dalin E."/>
            <person name="Tice H."/>
            <person name="Bruce D."/>
            <person name="Goodwin L."/>
            <person name="Pitluck S."/>
            <person name="Chertkov O."/>
            <person name="Brettin T."/>
            <person name="Detter J.C."/>
            <person name="Han C."/>
            <person name="Larimer F."/>
            <person name="Land M."/>
            <person name="Hauser L."/>
            <person name="Kyrpides N."/>
            <person name="Mikhailova N."/>
            <person name="Brumm P."/>
            <person name="Mead D.A."/>
            <person name="Richardson P."/>
        </authorList>
    </citation>
    <scope>NUCLEOTIDE SEQUENCE [LARGE SCALE GENOMIC DNA]</scope>
    <source>
        <strain>WCH70</strain>
    </source>
</reference>
<gene>
    <name evidence="1" type="primary">hfq</name>
    <name type="ordered locus">GWCH70_1223</name>
</gene>
<name>HFQ_GEOSW</name>
<dbReference type="EMBL" id="CP001638">
    <property type="protein sequence ID" value="ACS24076.1"/>
    <property type="molecule type" value="Genomic_DNA"/>
</dbReference>
<dbReference type="SMR" id="C5D9J0"/>
<dbReference type="STRING" id="471223.GWCH70_1223"/>
<dbReference type="KEGG" id="gwc:GWCH70_1223"/>
<dbReference type="eggNOG" id="COG1923">
    <property type="taxonomic scope" value="Bacteria"/>
</dbReference>
<dbReference type="HOGENOM" id="CLU_113688_3_0_9"/>
<dbReference type="OrthoDB" id="9799751at2"/>
<dbReference type="GO" id="GO:0005829">
    <property type="term" value="C:cytosol"/>
    <property type="evidence" value="ECO:0007669"/>
    <property type="project" value="TreeGrafter"/>
</dbReference>
<dbReference type="GO" id="GO:0003723">
    <property type="term" value="F:RNA binding"/>
    <property type="evidence" value="ECO:0007669"/>
    <property type="project" value="UniProtKB-UniRule"/>
</dbReference>
<dbReference type="GO" id="GO:0006355">
    <property type="term" value="P:regulation of DNA-templated transcription"/>
    <property type="evidence" value="ECO:0007669"/>
    <property type="project" value="InterPro"/>
</dbReference>
<dbReference type="GO" id="GO:0043487">
    <property type="term" value="P:regulation of RNA stability"/>
    <property type="evidence" value="ECO:0007669"/>
    <property type="project" value="TreeGrafter"/>
</dbReference>
<dbReference type="GO" id="GO:0045974">
    <property type="term" value="P:regulation of translation, ncRNA-mediated"/>
    <property type="evidence" value="ECO:0007669"/>
    <property type="project" value="TreeGrafter"/>
</dbReference>
<dbReference type="CDD" id="cd01716">
    <property type="entry name" value="Hfq"/>
    <property type="match status" value="1"/>
</dbReference>
<dbReference type="FunFam" id="2.30.30.100:FF:000012">
    <property type="entry name" value="RNA-binding protein Hfq"/>
    <property type="match status" value="1"/>
</dbReference>
<dbReference type="Gene3D" id="2.30.30.100">
    <property type="match status" value="1"/>
</dbReference>
<dbReference type="HAMAP" id="MF_00436">
    <property type="entry name" value="Hfq"/>
    <property type="match status" value="1"/>
</dbReference>
<dbReference type="InterPro" id="IPR005001">
    <property type="entry name" value="Hfq"/>
</dbReference>
<dbReference type="InterPro" id="IPR010920">
    <property type="entry name" value="LSM_dom_sf"/>
</dbReference>
<dbReference type="InterPro" id="IPR047575">
    <property type="entry name" value="Sm"/>
</dbReference>
<dbReference type="NCBIfam" id="TIGR02383">
    <property type="entry name" value="Hfq"/>
    <property type="match status" value="1"/>
</dbReference>
<dbReference type="NCBIfam" id="NF001602">
    <property type="entry name" value="PRK00395.1"/>
    <property type="match status" value="1"/>
</dbReference>
<dbReference type="PANTHER" id="PTHR34772">
    <property type="entry name" value="RNA-BINDING PROTEIN HFQ"/>
    <property type="match status" value="1"/>
</dbReference>
<dbReference type="PANTHER" id="PTHR34772:SF1">
    <property type="entry name" value="RNA-BINDING PROTEIN HFQ"/>
    <property type="match status" value="1"/>
</dbReference>
<dbReference type="Pfam" id="PF17209">
    <property type="entry name" value="Hfq"/>
    <property type="match status" value="1"/>
</dbReference>
<dbReference type="SUPFAM" id="SSF50182">
    <property type="entry name" value="Sm-like ribonucleoproteins"/>
    <property type="match status" value="1"/>
</dbReference>
<dbReference type="PROSITE" id="PS52002">
    <property type="entry name" value="SM"/>
    <property type="match status" value="1"/>
</dbReference>